<keyword id="KW-0472">Membrane</keyword>
<keyword id="KW-1185">Reference proteome</keyword>
<keyword id="KW-0812">Transmembrane</keyword>
<keyword id="KW-1133">Transmembrane helix</keyword>
<name>YJ001_HUMAN</name>
<proteinExistence type="uncertain"/>
<organism>
    <name type="scientific">Homo sapiens</name>
    <name type="common">Human</name>
    <dbReference type="NCBI Taxonomy" id="9606"/>
    <lineage>
        <taxon>Eukaryota</taxon>
        <taxon>Metazoa</taxon>
        <taxon>Chordata</taxon>
        <taxon>Craniata</taxon>
        <taxon>Vertebrata</taxon>
        <taxon>Euteleostomi</taxon>
        <taxon>Mammalia</taxon>
        <taxon>Eutheria</taxon>
        <taxon>Euarchontoglires</taxon>
        <taxon>Primates</taxon>
        <taxon>Haplorrhini</taxon>
        <taxon>Catarrhini</taxon>
        <taxon>Hominidae</taxon>
        <taxon>Homo</taxon>
    </lineage>
</organism>
<feature type="chain" id="PRO_0000299535" description="Putative uncharacterized protein PRO1933">
    <location>
        <begin position="1"/>
        <end position="126"/>
    </location>
</feature>
<feature type="transmembrane region" description="Helical" evidence="1">
    <location>
        <begin position="48"/>
        <end position="68"/>
    </location>
</feature>
<accession>Q9H354</accession>
<sequence>MNKHNLRLVQLASELILIEIIPKLFLSQVTTISHIKREKIPPNHRKGILCMFPWQCVVYVFSNFVWLVIHRFSNGFIQFLGEPYRLMTASGTHGRIKFMVDIPIIKNTQVLRIPVLKDPKMLSKKH</sequence>
<reference key="1">
    <citation type="submission" date="1999-03" db="EMBL/GenBank/DDBJ databases">
        <title>Functional prediction of the coding sequences of 11 new genes deduced by analysis of cDNA clones from human fetal liver.</title>
        <authorList>
            <person name="Zhang C."/>
            <person name="Yu Y."/>
            <person name="Zhang S."/>
            <person name="Zhou G."/>
            <person name="Wei H."/>
            <person name="Bi J."/>
            <person name="Dong C."/>
            <person name="Zai Y."/>
            <person name="Xu W."/>
            <person name="Gao F."/>
            <person name="Liu M."/>
            <person name="He F."/>
        </authorList>
    </citation>
    <scope>NUCLEOTIDE SEQUENCE [LARGE SCALE MRNA]</scope>
    <source>
        <tissue>Fetal liver</tissue>
    </source>
</reference>
<protein>
    <recommendedName>
        <fullName>Putative uncharacterized protein PRO1933</fullName>
    </recommendedName>
</protein>
<dbReference type="EMBL" id="AF132203">
    <property type="protein sequence ID" value="AAG35549.1"/>
    <property type="molecule type" value="mRNA"/>
</dbReference>
<dbReference type="BioMuta" id="PRO1933"/>
<dbReference type="jPOST" id="Q9H354"/>
<dbReference type="neXtProt" id="NX_Q9H354"/>
<dbReference type="InParanoid" id="Q9H354"/>
<dbReference type="PAN-GO" id="Q9H354">
    <property type="GO annotations" value="0 GO annotations based on evolutionary models"/>
</dbReference>
<dbReference type="Pharos" id="Q9H354">
    <property type="development level" value="Tdark"/>
</dbReference>
<dbReference type="Proteomes" id="UP000005640">
    <property type="component" value="Unplaced"/>
</dbReference>
<dbReference type="RNAct" id="Q9H354">
    <property type="molecule type" value="protein"/>
</dbReference>
<dbReference type="GO" id="GO:0016020">
    <property type="term" value="C:membrane"/>
    <property type="evidence" value="ECO:0007669"/>
    <property type="project" value="UniProtKB-SubCell"/>
</dbReference>
<gene>
    <name type="ORF">PRO1933</name>
</gene>
<evidence type="ECO:0000255" key="1"/>
<evidence type="ECO:0000305" key="2"/>
<comment type="subcellular location">
    <subcellularLocation>
        <location evidence="2">Membrane</location>
        <topology evidence="2">Single-pass membrane protein</topology>
    </subcellularLocation>
</comment>
<comment type="caution">
    <text evidence="2">Product of a dubious CDS prediction.</text>
</comment>